<feature type="chain" id="PRO_0000286188" description="Spermidine/putrescine import ATP-binding protein PotA">
    <location>
        <begin position="1"/>
        <end position="381"/>
    </location>
</feature>
<feature type="domain" description="ABC transporter" evidence="1">
    <location>
        <begin position="22"/>
        <end position="252"/>
    </location>
</feature>
<feature type="binding site" evidence="1">
    <location>
        <begin position="54"/>
        <end position="61"/>
    </location>
    <ligand>
        <name>ATP</name>
        <dbReference type="ChEBI" id="CHEBI:30616"/>
    </ligand>
</feature>
<name>POTA_NOSS1</name>
<comment type="function">
    <text evidence="1">Part of the ABC transporter complex PotABCD involved in spermidine/putrescine import. Responsible for energy coupling to the transport system.</text>
</comment>
<comment type="catalytic activity">
    <reaction evidence="1">
        <text>ATP + H2O + polyamine-[polyamine-binding protein]Side 1 = ADP + phosphate + polyamineSide 2 + [polyamine-binding protein]Side 1.</text>
        <dbReference type="EC" id="7.6.2.11"/>
    </reaction>
</comment>
<comment type="subunit">
    <text evidence="1">The complex is composed of two ATP-binding proteins (PotA), two transmembrane proteins (PotB and PotC) and a solute-binding protein (PotD).</text>
</comment>
<comment type="subcellular location">
    <subcellularLocation>
        <location evidence="1">Cell inner membrane</location>
        <topology evidence="1">Peripheral membrane protein</topology>
    </subcellularLocation>
</comment>
<comment type="similarity">
    <text evidence="1">Belongs to the ABC transporter superfamily. Spermidine/putrescine importer (TC 3.A.1.11.1) family.</text>
</comment>
<protein>
    <recommendedName>
        <fullName evidence="1">Spermidine/putrescine import ATP-binding protein PotA</fullName>
        <ecNumber evidence="1">7.6.2.11</ecNumber>
    </recommendedName>
</protein>
<accession>Q8YM92</accession>
<organism>
    <name type="scientific">Nostoc sp. (strain PCC 7120 / SAG 25.82 / UTEX 2576)</name>
    <dbReference type="NCBI Taxonomy" id="103690"/>
    <lineage>
        <taxon>Bacteria</taxon>
        <taxon>Bacillati</taxon>
        <taxon>Cyanobacteriota</taxon>
        <taxon>Cyanophyceae</taxon>
        <taxon>Nostocales</taxon>
        <taxon>Nostocaceae</taxon>
        <taxon>Nostoc</taxon>
    </lineage>
</organism>
<gene>
    <name evidence="1" type="primary">potA</name>
    <name type="ordered locus">all5044</name>
</gene>
<dbReference type="EC" id="7.6.2.11" evidence="1"/>
<dbReference type="EMBL" id="BA000019">
    <property type="protein sequence ID" value="BAB76743.1"/>
    <property type="molecule type" value="Genomic_DNA"/>
</dbReference>
<dbReference type="PIR" id="AD2436">
    <property type="entry name" value="AD2436"/>
</dbReference>
<dbReference type="RefSeq" id="WP_010999170.1">
    <property type="nucleotide sequence ID" value="NZ_RSCN01000014.1"/>
</dbReference>
<dbReference type="SMR" id="Q8YM92"/>
<dbReference type="STRING" id="103690.gene:10497102"/>
<dbReference type="KEGG" id="ana:all5044"/>
<dbReference type="eggNOG" id="COG3842">
    <property type="taxonomic scope" value="Bacteria"/>
</dbReference>
<dbReference type="OrthoDB" id="9802264at2"/>
<dbReference type="BRENDA" id="7.6.2.11">
    <property type="organism ID" value="8113"/>
</dbReference>
<dbReference type="Proteomes" id="UP000002483">
    <property type="component" value="Chromosome"/>
</dbReference>
<dbReference type="GO" id="GO:0043190">
    <property type="term" value="C:ATP-binding cassette (ABC) transporter complex"/>
    <property type="evidence" value="ECO:0007669"/>
    <property type="project" value="InterPro"/>
</dbReference>
<dbReference type="GO" id="GO:0015594">
    <property type="term" value="F:ABC-type putrescine transporter activity"/>
    <property type="evidence" value="ECO:0007669"/>
    <property type="project" value="InterPro"/>
</dbReference>
<dbReference type="GO" id="GO:0005524">
    <property type="term" value="F:ATP binding"/>
    <property type="evidence" value="ECO:0007669"/>
    <property type="project" value="UniProtKB-KW"/>
</dbReference>
<dbReference type="GO" id="GO:0016887">
    <property type="term" value="F:ATP hydrolysis activity"/>
    <property type="evidence" value="ECO:0007669"/>
    <property type="project" value="InterPro"/>
</dbReference>
<dbReference type="CDD" id="cd03300">
    <property type="entry name" value="ABC_PotA_N"/>
    <property type="match status" value="1"/>
</dbReference>
<dbReference type="FunFam" id="3.40.50.300:FF:000133">
    <property type="entry name" value="Spermidine/putrescine import ATP-binding protein PotA"/>
    <property type="match status" value="1"/>
</dbReference>
<dbReference type="Gene3D" id="2.40.50.100">
    <property type="match status" value="1"/>
</dbReference>
<dbReference type="Gene3D" id="3.40.50.300">
    <property type="entry name" value="P-loop containing nucleotide triphosphate hydrolases"/>
    <property type="match status" value="1"/>
</dbReference>
<dbReference type="InterPro" id="IPR003593">
    <property type="entry name" value="AAA+_ATPase"/>
</dbReference>
<dbReference type="InterPro" id="IPR050093">
    <property type="entry name" value="ABC_SmlMolc_Importer"/>
</dbReference>
<dbReference type="InterPro" id="IPR003439">
    <property type="entry name" value="ABC_transporter-like_ATP-bd"/>
</dbReference>
<dbReference type="InterPro" id="IPR017871">
    <property type="entry name" value="ABC_transporter-like_CS"/>
</dbReference>
<dbReference type="InterPro" id="IPR008995">
    <property type="entry name" value="Mo/tungstate-bd_C_term_dom"/>
</dbReference>
<dbReference type="InterPro" id="IPR027417">
    <property type="entry name" value="P-loop_NTPase"/>
</dbReference>
<dbReference type="InterPro" id="IPR005893">
    <property type="entry name" value="PotA-like"/>
</dbReference>
<dbReference type="InterPro" id="IPR017879">
    <property type="entry name" value="PotA_ATP-bd"/>
</dbReference>
<dbReference type="InterPro" id="IPR013611">
    <property type="entry name" value="Transp-assoc_OB_typ2"/>
</dbReference>
<dbReference type="NCBIfam" id="TIGR01187">
    <property type="entry name" value="potA"/>
    <property type="match status" value="1"/>
</dbReference>
<dbReference type="PANTHER" id="PTHR42781">
    <property type="entry name" value="SPERMIDINE/PUTRESCINE IMPORT ATP-BINDING PROTEIN POTA"/>
    <property type="match status" value="1"/>
</dbReference>
<dbReference type="PANTHER" id="PTHR42781:SF4">
    <property type="entry name" value="SPERMIDINE_PUTRESCINE IMPORT ATP-BINDING PROTEIN POTA"/>
    <property type="match status" value="1"/>
</dbReference>
<dbReference type="Pfam" id="PF00005">
    <property type="entry name" value="ABC_tran"/>
    <property type="match status" value="1"/>
</dbReference>
<dbReference type="Pfam" id="PF08402">
    <property type="entry name" value="TOBE_2"/>
    <property type="match status" value="1"/>
</dbReference>
<dbReference type="SMART" id="SM00382">
    <property type="entry name" value="AAA"/>
    <property type="match status" value="1"/>
</dbReference>
<dbReference type="SUPFAM" id="SSF50331">
    <property type="entry name" value="MOP-like"/>
    <property type="match status" value="1"/>
</dbReference>
<dbReference type="SUPFAM" id="SSF52540">
    <property type="entry name" value="P-loop containing nucleoside triphosphate hydrolases"/>
    <property type="match status" value="1"/>
</dbReference>
<dbReference type="PROSITE" id="PS00211">
    <property type="entry name" value="ABC_TRANSPORTER_1"/>
    <property type="match status" value="1"/>
</dbReference>
<dbReference type="PROSITE" id="PS50893">
    <property type="entry name" value="ABC_TRANSPORTER_2"/>
    <property type="match status" value="1"/>
</dbReference>
<dbReference type="PROSITE" id="PS51305">
    <property type="entry name" value="POTA"/>
    <property type="match status" value="1"/>
</dbReference>
<reference key="1">
    <citation type="journal article" date="2001" name="DNA Res.">
        <title>Complete genomic sequence of the filamentous nitrogen-fixing cyanobacterium Anabaena sp. strain PCC 7120.</title>
        <authorList>
            <person name="Kaneko T."/>
            <person name="Nakamura Y."/>
            <person name="Wolk C.P."/>
            <person name="Kuritz T."/>
            <person name="Sasamoto S."/>
            <person name="Watanabe A."/>
            <person name="Iriguchi M."/>
            <person name="Ishikawa A."/>
            <person name="Kawashima K."/>
            <person name="Kimura T."/>
            <person name="Kishida Y."/>
            <person name="Kohara M."/>
            <person name="Matsumoto M."/>
            <person name="Matsuno A."/>
            <person name="Muraki A."/>
            <person name="Nakazaki N."/>
            <person name="Shimpo S."/>
            <person name="Sugimoto M."/>
            <person name="Takazawa M."/>
            <person name="Yamada M."/>
            <person name="Yasuda M."/>
            <person name="Tabata S."/>
        </authorList>
    </citation>
    <scope>NUCLEOTIDE SEQUENCE [LARGE SCALE GENOMIC DNA]</scope>
    <source>
        <strain>PCC 7120 / SAG 25.82 / UTEX 2576</strain>
    </source>
</reference>
<evidence type="ECO:0000255" key="1">
    <source>
        <dbReference type="HAMAP-Rule" id="MF_01726"/>
    </source>
</evidence>
<sequence length="381" mass="42704">MNMAQTVTQNPRGVKTLLPLDVELRNVFKFFNQEPAVHGVDLDVRQGEFFSILGPSGCGKTTTLRLIAGFEQVDAGKLLIQGQPMTNIPPYRRPVNTVFQSYALFNHLNVWDNVAFGLRLKKSRKSEVESRVKEALKLVKMESLRSRFPSQLSGGQQQRVALARALVNRPAVVLLDEPLGALDLKLRKEMQVELSNLHKNLGLTFVMVTHDQEEALSLSDRIAVMNQGKIEQIGTPQEIYERPKTSFVADFIGDTNLFSGEITVLEAEYIQIVTKTGLTIVVARNEDTPAELLKPVVVSVRPEKIQLSLYPPSSLNNCFEGRLINVMYLGTHVNYVVQLINGMNINVLQPNTFGNLPDRETPIYAWWAESDCLAINQMTND</sequence>
<keyword id="KW-0067">ATP-binding</keyword>
<keyword id="KW-0997">Cell inner membrane</keyword>
<keyword id="KW-1003">Cell membrane</keyword>
<keyword id="KW-0472">Membrane</keyword>
<keyword id="KW-0547">Nucleotide-binding</keyword>
<keyword id="KW-1185">Reference proteome</keyword>
<keyword id="KW-1278">Translocase</keyword>
<keyword id="KW-0813">Transport</keyword>
<proteinExistence type="inferred from homology"/>